<gene>
    <name evidence="1" type="primary">hcp</name>
    <name type="ordered locus">ECIAI1_0913</name>
</gene>
<feature type="chain" id="PRO_1000192560" description="Hydroxylamine reductase">
    <location>
        <begin position="1"/>
        <end position="550"/>
    </location>
</feature>
<feature type="binding site" evidence="1">
    <location>
        <position position="3"/>
    </location>
    <ligand>
        <name>[2Fe-2S] cluster</name>
        <dbReference type="ChEBI" id="CHEBI:190135"/>
    </ligand>
</feature>
<feature type="binding site" evidence="1">
    <location>
        <position position="6"/>
    </location>
    <ligand>
        <name>[2Fe-2S] cluster</name>
        <dbReference type="ChEBI" id="CHEBI:190135"/>
    </ligand>
</feature>
<feature type="binding site" evidence="1">
    <location>
        <position position="18"/>
    </location>
    <ligand>
        <name>[2Fe-2S] cluster</name>
        <dbReference type="ChEBI" id="CHEBI:190135"/>
    </ligand>
</feature>
<feature type="binding site" evidence="1">
    <location>
        <position position="25"/>
    </location>
    <ligand>
        <name>[2Fe-2S] cluster</name>
        <dbReference type="ChEBI" id="CHEBI:190135"/>
    </ligand>
</feature>
<feature type="binding site" evidence="1">
    <location>
        <position position="249"/>
    </location>
    <ligand>
        <name>hybrid [4Fe-2O-2S] cluster</name>
        <dbReference type="ChEBI" id="CHEBI:60519"/>
    </ligand>
</feature>
<feature type="binding site" evidence="1">
    <location>
        <position position="273"/>
    </location>
    <ligand>
        <name>hybrid [4Fe-2O-2S] cluster</name>
        <dbReference type="ChEBI" id="CHEBI:60519"/>
    </ligand>
</feature>
<feature type="binding site" evidence="1">
    <location>
        <position position="317"/>
    </location>
    <ligand>
        <name>hybrid [4Fe-2O-2S] cluster</name>
        <dbReference type="ChEBI" id="CHEBI:60519"/>
    </ligand>
</feature>
<feature type="binding site" description="via persulfide group" evidence="1">
    <location>
        <position position="405"/>
    </location>
    <ligand>
        <name>hybrid [4Fe-2O-2S] cluster</name>
        <dbReference type="ChEBI" id="CHEBI:60519"/>
    </ligand>
</feature>
<feature type="binding site" evidence="1">
    <location>
        <position position="433"/>
    </location>
    <ligand>
        <name>hybrid [4Fe-2O-2S] cluster</name>
        <dbReference type="ChEBI" id="CHEBI:60519"/>
    </ligand>
</feature>
<feature type="binding site" evidence="1">
    <location>
        <position position="458"/>
    </location>
    <ligand>
        <name>hybrid [4Fe-2O-2S] cluster</name>
        <dbReference type="ChEBI" id="CHEBI:60519"/>
    </ligand>
</feature>
<feature type="binding site" evidence="1">
    <location>
        <position position="492"/>
    </location>
    <ligand>
        <name>hybrid [4Fe-2O-2S] cluster</name>
        <dbReference type="ChEBI" id="CHEBI:60519"/>
    </ligand>
</feature>
<feature type="binding site" evidence="1">
    <location>
        <position position="494"/>
    </location>
    <ligand>
        <name>hybrid [4Fe-2O-2S] cluster</name>
        <dbReference type="ChEBI" id="CHEBI:60519"/>
    </ligand>
</feature>
<feature type="modified residue" description="Cysteine persulfide" evidence="1">
    <location>
        <position position="405"/>
    </location>
</feature>
<comment type="function">
    <text evidence="1">Catalyzes the reduction of hydroxylamine to form NH(3) and H(2)O.</text>
</comment>
<comment type="catalytic activity">
    <reaction evidence="1">
        <text>A + NH4(+) + H2O = hydroxylamine + AH2 + H(+)</text>
        <dbReference type="Rhea" id="RHEA:22052"/>
        <dbReference type="ChEBI" id="CHEBI:13193"/>
        <dbReference type="ChEBI" id="CHEBI:15377"/>
        <dbReference type="ChEBI" id="CHEBI:15378"/>
        <dbReference type="ChEBI" id="CHEBI:15429"/>
        <dbReference type="ChEBI" id="CHEBI:17499"/>
        <dbReference type="ChEBI" id="CHEBI:28938"/>
        <dbReference type="EC" id="1.7.99.1"/>
    </reaction>
</comment>
<comment type="cofactor">
    <cofactor evidence="1">
        <name>[2Fe-2S] cluster</name>
        <dbReference type="ChEBI" id="CHEBI:190135"/>
    </cofactor>
    <text evidence="1">Binds 1 [2Fe-2S] cluster.</text>
</comment>
<comment type="cofactor">
    <cofactor evidence="1">
        <name>hybrid [4Fe-2O-2S] cluster</name>
        <dbReference type="ChEBI" id="CHEBI:60519"/>
    </cofactor>
    <text evidence="1">Binds 1 hybrid [4Fe-2O-2S] cluster.</text>
</comment>
<comment type="subcellular location">
    <subcellularLocation>
        <location evidence="1">Cytoplasm</location>
    </subcellularLocation>
</comment>
<comment type="similarity">
    <text evidence="1">Belongs to the HCP family.</text>
</comment>
<name>HCP_ECO8A</name>
<protein>
    <recommendedName>
        <fullName evidence="1">Hydroxylamine reductase</fullName>
        <ecNumber evidence="1">1.7.99.1</ecNumber>
    </recommendedName>
    <alternativeName>
        <fullName evidence="1">Hybrid-cluster protein</fullName>
        <shortName evidence="1">HCP</shortName>
    </alternativeName>
    <alternativeName>
        <fullName evidence="1">Prismane protein</fullName>
    </alternativeName>
</protein>
<accession>B7M801</accession>
<reference key="1">
    <citation type="journal article" date="2009" name="PLoS Genet.">
        <title>Organised genome dynamics in the Escherichia coli species results in highly diverse adaptive paths.</title>
        <authorList>
            <person name="Touchon M."/>
            <person name="Hoede C."/>
            <person name="Tenaillon O."/>
            <person name="Barbe V."/>
            <person name="Baeriswyl S."/>
            <person name="Bidet P."/>
            <person name="Bingen E."/>
            <person name="Bonacorsi S."/>
            <person name="Bouchier C."/>
            <person name="Bouvet O."/>
            <person name="Calteau A."/>
            <person name="Chiapello H."/>
            <person name="Clermont O."/>
            <person name="Cruveiller S."/>
            <person name="Danchin A."/>
            <person name="Diard M."/>
            <person name="Dossat C."/>
            <person name="Karoui M.E."/>
            <person name="Frapy E."/>
            <person name="Garry L."/>
            <person name="Ghigo J.M."/>
            <person name="Gilles A.M."/>
            <person name="Johnson J."/>
            <person name="Le Bouguenec C."/>
            <person name="Lescat M."/>
            <person name="Mangenot S."/>
            <person name="Martinez-Jehanne V."/>
            <person name="Matic I."/>
            <person name="Nassif X."/>
            <person name="Oztas S."/>
            <person name="Petit M.A."/>
            <person name="Pichon C."/>
            <person name="Rouy Z."/>
            <person name="Ruf C.S."/>
            <person name="Schneider D."/>
            <person name="Tourret J."/>
            <person name="Vacherie B."/>
            <person name="Vallenet D."/>
            <person name="Medigue C."/>
            <person name="Rocha E.P.C."/>
            <person name="Denamur E."/>
        </authorList>
    </citation>
    <scope>NUCLEOTIDE SEQUENCE [LARGE SCALE GENOMIC DNA]</scope>
    <source>
        <strain>IAI1</strain>
    </source>
</reference>
<dbReference type="EC" id="1.7.99.1" evidence="1"/>
<dbReference type="EMBL" id="CU928160">
    <property type="protein sequence ID" value="CAQ97777.1"/>
    <property type="molecule type" value="Genomic_DNA"/>
</dbReference>
<dbReference type="RefSeq" id="WP_000458817.1">
    <property type="nucleotide sequence ID" value="NC_011741.1"/>
</dbReference>
<dbReference type="SMR" id="B7M801"/>
<dbReference type="GeneID" id="75202475"/>
<dbReference type="KEGG" id="ecr:ECIAI1_0913"/>
<dbReference type="HOGENOM" id="CLU_038344_2_0_6"/>
<dbReference type="GO" id="GO:0005737">
    <property type="term" value="C:cytoplasm"/>
    <property type="evidence" value="ECO:0007669"/>
    <property type="project" value="UniProtKB-SubCell"/>
</dbReference>
<dbReference type="GO" id="GO:0051537">
    <property type="term" value="F:2 iron, 2 sulfur cluster binding"/>
    <property type="evidence" value="ECO:0007669"/>
    <property type="project" value="UniProtKB-KW"/>
</dbReference>
<dbReference type="GO" id="GO:0050418">
    <property type="term" value="F:hydroxylamine reductase activity"/>
    <property type="evidence" value="ECO:0007669"/>
    <property type="project" value="UniProtKB-UniRule"/>
</dbReference>
<dbReference type="GO" id="GO:0046872">
    <property type="term" value="F:metal ion binding"/>
    <property type="evidence" value="ECO:0007669"/>
    <property type="project" value="UniProtKB-KW"/>
</dbReference>
<dbReference type="GO" id="GO:0004601">
    <property type="term" value="F:peroxidase activity"/>
    <property type="evidence" value="ECO:0007669"/>
    <property type="project" value="TreeGrafter"/>
</dbReference>
<dbReference type="GO" id="GO:0042542">
    <property type="term" value="P:response to hydrogen peroxide"/>
    <property type="evidence" value="ECO:0007669"/>
    <property type="project" value="TreeGrafter"/>
</dbReference>
<dbReference type="CDD" id="cd01914">
    <property type="entry name" value="HCP"/>
    <property type="match status" value="1"/>
</dbReference>
<dbReference type="FunFam" id="1.20.1270.20:FF:000001">
    <property type="entry name" value="Hydroxylamine reductase"/>
    <property type="match status" value="1"/>
</dbReference>
<dbReference type="FunFam" id="1.20.1270.20:FF:000002">
    <property type="entry name" value="Hydroxylamine reductase"/>
    <property type="match status" value="1"/>
</dbReference>
<dbReference type="FunFam" id="3.40.50.2030:FF:000001">
    <property type="entry name" value="Hydroxylamine reductase"/>
    <property type="match status" value="1"/>
</dbReference>
<dbReference type="FunFam" id="3.40.50.2030:FF:000002">
    <property type="entry name" value="Hydroxylamine reductase"/>
    <property type="match status" value="1"/>
</dbReference>
<dbReference type="Gene3D" id="1.20.1270.20">
    <property type="match status" value="2"/>
</dbReference>
<dbReference type="Gene3D" id="3.40.50.2030">
    <property type="match status" value="2"/>
</dbReference>
<dbReference type="HAMAP" id="MF_00069">
    <property type="entry name" value="Hydroxylam_reduct"/>
    <property type="match status" value="1"/>
</dbReference>
<dbReference type="InterPro" id="IPR004137">
    <property type="entry name" value="HCP/CODH"/>
</dbReference>
<dbReference type="InterPro" id="IPR010048">
    <property type="entry name" value="Hydroxylam_reduct"/>
</dbReference>
<dbReference type="InterPro" id="IPR016099">
    <property type="entry name" value="Prismane-like_a/b-sand"/>
</dbReference>
<dbReference type="InterPro" id="IPR011254">
    <property type="entry name" value="Prismane-like_sf"/>
</dbReference>
<dbReference type="InterPro" id="IPR016100">
    <property type="entry name" value="Prismane_a-bundle"/>
</dbReference>
<dbReference type="NCBIfam" id="TIGR01703">
    <property type="entry name" value="hybrid_clust"/>
    <property type="match status" value="1"/>
</dbReference>
<dbReference type="NCBIfam" id="NF003658">
    <property type="entry name" value="PRK05290.1"/>
    <property type="match status" value="1"/>
</dbReference>
<dbReference type="PANTHER" id="PTHR30109">
    <property type="entry name" value="HYDROXYLAMINE REDUCTASE"/>
    <property type="match status" value="1"/>
</dbReference>
<dbReference type="PANTHER" id="PTHR30109:SF0">
    <property type="entry name" value="HYDROXYLAMINE REDUCTASE"/>
    <property type="match status" value="1"/>
</dbReference>
<dbReference type="Pfam" id="PF03063">
    <property type="entry name" value="Prismane"/>
    <property type="match status" value="1"/>
</dbReference>
<dbReference type="PIRSF" id="PIRSF000076">
    <property type="entry name" value="HCP"/>
    <property type="match status" value="1"/>
</dbReference>
<dbReference type="SUPFAM" id="SSF56821">
    <property type="entry name" value="Prismane protein-like"/>
    <property type="match status" value="1"/>
</dbReference>
<organism>
    <name type="scientific">Escherichia coli O8 (strain IAI1)</name>
    <dbReference type="NCBI Taxonomy" id="585034"/>
    <lineage>
        <taxon>Bacteria</taxon>
        <taxon>Pseudomonadati</taxon>
        <taxon>Pseudomonadota</taxon>
        <taxon>Gammaproteobacteria</taxon>
        <taxon>Enterobacterales</taxon>
        <taxon>Enterobacteriaceae</taxon>
        <taxon>Escherichia</taxon>
    </lineage>
</organism>
<sequence>MFCVQCEQTIRTPAGNGCSYAQGMCGKTAETSDLQDLLIAALQGLSAWAVKAREYGIINHDVDSFAPRAFFSTLTNVNFDSPRIVGYAREAIALREALKAQCLAVDANARVDNPMADLQLVSDDLGELQRQAAEFTPNKDKAAIGENILGLRLLCLYGLKGAAAYMEHAHVLGQYDNDIYAQYHKIMAWLGTWPADMNALLECSMEIGQMNFKVMSILDAGETGKYGHPTPTQVNVKATAGKCILISGHDLKDLYNLLEQTEGTGVNVYTHGEMLPAHGYPELRKFKHLVGNYGSGWQNQQVEFARFPGPIVMTSNCIIDPTVGAYDDRIWTRSIVGWPGVRHLDGEDFSAVIAQAQQMAGFPYSEIPHLITVGFGRQTLLGAADTLIDLVSREKLRHIFLLGGCDGARGERHYFTDFATSVPDDCLILTLACGKYRFNKLEFGDIEGLPRLVDAGQCNDAYSAIILAVTLAEKLGCGVNDLPLSLVLSWFEQKAIVILLTLLSLGVKNIVTGPTAPGFLTPDLLAVLNEKFGLRSITTVEEDMKQLLSA</sequence>
<evidence type="ECO:0000255" key="1">
    <source>
        <dbReference type="HAMAP-Rule" id="MF_00069"/>
    </source>
</evidence>
<keyword id="KW-0001">2Fe-2S</keyword>
<keyword id="KW-0963">Cytoplasm</keyword>
<keyword id="KW-0408">Iron</keyword>
<keyword id="KW-0411">Iron-sulfur</keyword>
<keyword id="KW-0479">Metal-binding</keyword>
<keyword id="KW-0560">Oxidoreductase</keyword>
<proteinExistence type="inferred from homology"/>